<dbReference type="EC" id="1.-.-.-" evidence="5"/>
<dbReference type="EMBL" id="AACD01000054">
    <property type="protein sequence ID" value="EAA63126.1"/>
    <property type="status" value="ALT_SEQ"/>
    <property type="molecule type" value="Genomic_DNA"/>
</dbReference>
<dbReference type="EMBL" id="BN001306">
    <property type="protein sequence ID" value="CBF83149.1"/>
    <property type="molecule type" value="Genomic_DNA"/>
</dbReference>
<dbReference type="RefSeq" id="XP_660829.1">
    <property type="nucleotide sequence ID" value="XM_655737.1"/>
</dbReference>
<dbReference type="SMR" id="C8VI81"/>
<dbReference type="STRING" id="227321.C8VI81"/>
<dbReference type="GlyCosmos" id="C8VI81">
    <property type="glycosylation" value="2 sites, No reported glycans"/>
</dbReference>
<dbReference type="EnsemblFungi" id="CBF83149">
    <property type="protein sequence ID" value="CBF83149"/>
    <property type="gene ID" value="ANIA_03225"/>
</dbReference>
<dbReference type="GeneID" id="2874149"/>
<dbReference type="KEGG" id="ani:ANIA_03225"/>
<dbReference type="VEuPathDB" id="FungiDB:AN3225"/>
<dbReference type="eggNOG" id="KOG0159">
    <property type="taxonomic scope" value="Eukaryota"/>
</dbReference>
<dbReference type="HOGENOM" id="CLU_001570_14_0_1"/>
<dbReference type="InParanoid" id="C8VI81"/>
<dbReference type="OMA" id="PWVINRH"/>
<dbReference type="OrthoDB" id="3934656at2759"/>
<dbReference type="Proteomes" id="UP000000560">
    <property type="component" value="Chromosome VI"/>
</dbReference>
<dbReference type="GO" id="GO:0016020">
    <property type="term" value="C:membrane"/>
    <property type="evidence" value="ECO:0007669"/>
    <property type="project" value="UniProtKB-SubCell"/>
</dbReference>
<dbReference type="GO" id="GO:0020037">
    <property type="term" value="F:heme binding"/>
    <property type="evidence" value="ECO:0007669"/>
    <property type="project" value="InterPro"/>
</dbReference>
<dbReference type="GO" id="GO:0005506">
    <property type="term" value="F:iron ion binding"/>
    <property type="evidence" value="ECO:0007669"/>
    <property type="project" value="InterPro"/>
</dbReference>
<dbReference type="GO" id="GO:0004497">
    <property type="term" value="F:monooxygenase activity"/>
    <property type="evidence" value="ECO:0007669"/>
    <property type="project" value="UniProtKB-KW"/>
</dbReference>
<dbReference type="GO" id="GO:0016705">
    <property type="term" value="F:oxidoreductase activity, acting on paired donors, with incorporation or reduction of molecular oxygen"/>
    <property type="evidence" value="ECO:0007669"/>
    <property type="project" value="InterPro"/>
</dbReference>
<dbReference type="GO" id="GO:0044550">
    <property type="term" value="P:secondary metabolite biosynthetic process"/>
    <property type="evidence" value="ECO:0000315"/>
    <property type="project" value="AspGD"/>
</dbReference>
<dbReference type="CDD" id="cd11060">
    <property type="entry name" value="CYP57A1-like"/>
    <property type="match status" value="1"/>
</dbReference>
<dbReference type="FunFam" id="1.10.630.10:FF:000050">
    <property type="entry name" value="Cytochrome P450 monooxygenase"/>
    <property type="match status" value="1"/>
</dbReference>
<dbReference type="Gene3D" id="1.10.630.10">
    <property type="entry name" value="Cytochrome P450"/>
    <property type="match status" value="1"/>
</dbReference>
<dbReference type="InterPro" id="IPR001128">
    <property type="entry name" value="Cyt_P450"/>
</dbReference>
<dbReference type="InterPro" id="IPR017972">
    <property type="entry name" value="Cyt_P450_CS"/>
</dbReference>
<dbReference type="InterPro" id="IPR002403">
    <property type="entry name" value="Cyt_P450_E_grp-IV"/>
</dbReference>
<dbReference type="InterPro" id="IPR036396">
    <property type="entry name" value="Cyt_P450_sf"/>
</dbReference>
<dbReference type="InterPro" id="IPR050121">
    <property type="entry name" value="Cytochrome_P450_monoxygenase"/>
</dbReference>
<dbReference type="PANTHER" id="PTHR24305">
    <property type="entry name" value="CYTOCHROME P450"/>
    <property type="match status" value="1"/>
</dbReference>
<dbReference type="PANTHER" id="PTHR24305:SF175">
    <property type="entry name" value="CYTOCHROME P450 MONOOXYGENASE PKFB"/>
    <property type="match status" value="1"/>
</dbReference>
<dbReference type="Pfam" id="PF00067">
    <property type="entry name" value="p450"/>
    <property type="match status" value="1"/>
</dbReference>
<dbReference type="PRINTS" id="PR00465">
    <property type="entry name" value="EP450IV"/>
</dbReference>
<dbReference type="PRINTS" id="PR00385">
    <property type="entry name" value="P450"/>
</dbReference>
<dbReference type="SUPFAM" id="SSF48264">
    <property type="entry name" value="Cytochrome P450"/>
    <property type="match status" value="1"/>
</dbReference>
<dbReference type="PROSITE" id="PS00086">
    <property type="entry name" value="CYTOCHROME_P450"/>
    <property type="match status" value="1"/>
</dbReference>
<gene>
    <name evidence="6" type="primary">pkfkB</name>
    <name type="ORF">ANIA_03225</name>
</gene>
<proteinExistence type="evidence at protein level"/>
<feature type="chain" id="PRO_0000446360" description="Cytochrome P450 monooxygenase pkfB">
    <location>
        <begin position="1"/>
        <end position="508"/>
    </location>
</feature>
<feature type="transmembrane region" description="Helical" evidence="2">
    <location>
        <begin position="9"/>
        <end position="29"/>
    </location>
</feature>
<feature type="binding site" description="axial binding residue" evidence="1">
    <location>
        <position position="450"/>
    </location>
    <ligand>
        <name>heme</name>
        <dbReference type="ChEBI" id="CHEBI:30413"/>
    </ligand>
    <ligandPart>
        <name>Fe</name>
        <dbReference type="ChEBI" id="CHEBI:18248"/>
    </ligandPart>
</feature>
<feature type="glycosylation site" description="N-linked (GlcNAc...) asparagine" evidence="3">
    <location>
        <position position="57"/>
    </location>
</feature>
<feature type="glycosylation site" description="N-linked (GlcNAc...) asparagine" evidence="3">
    <location>
        <position position="305"/>
    </location>
</feature>
<reference key="1">
    <citation type="journal article" date="2005" name="Nature">
        <title>Sequencing of Aspergillus nidulans and comparative analysis with A. fumigatus and A. oryzae.</title>
        <authorList>
            <person name="Galagan J.E."/>
            <person name="Calvo S.E."/>
            <person name="Cuomo C."/>
            <person name="Ma L.-J."/>
            <person name="Wortman J.R."/>
            <person name="Batzoglou S."/>
            <person name="Lee S.-I."/>
            <person name="Bastuerkmen M."/>
            <person name="Spevak C.C."/>
            <person name="Clutterbuck J."/>
            <person name="Kapitonov V."/>
            <person name="Jurka J."/>
            <person name="Scazzocchio C."/>
            <person name="Farman M.L."/>
            <person name="Butler J."/>
            <person name="Purcell S."/>
            <person name="Harris S."/>
            <person name="Braus G.H."/>
            <person name="Draht O."/>
            <person name="Busch S."/>
            <person name="D'Enfert C."/>
            <person name="Bouchier C."/>
            <person name="Goldman G.H."/>
            <person name="Bell-Pedersen D."/>
            <person name="Griffiths-Jones S."/>
            <person name="Doonan J.H."/>
            <person name="Yu J."/>
            <person name="Vienken K."/>
            <person name="Pain A."/>
            <person name="Freitag M."/>
            <person name="Selker E.U."/>
            <person name="Archer D.B."/>
            <person name="Penalva M.A."/>
            <person name="Oakley B.R."/>
            <person name="Momany M."/>
            <person name="Tanaka T."/>
            <person name="Kumagai T."/>
            <person name="Asai K."/>
            <person name="Machida M."/>
            <person name="Nierman W.C."/>
            <person name="Denning D.W."/>
            <person name="Caddick M.X."/>
            <person name="Hynes M."/>
            <person name="Paoletti M."/>
            <person name="Fischer R."/>
            <person name="Miller B.L."/>
            <person name="Dyer P.S."/>
            <person name="Sachs M.S."/>
            <person name="Osmani S.A."/>
            <person name="Birren B.W."/>
        </authorList>
    </citation>
    <scope>NUCLEOTIDE SEQUENCE [LARGE SCALE GENOMIC DNA]</scope>
    <source>
        <strain>FGSC A4 / ATCC 38163 / CBS 112.46 / NRRL 194 / M139</strain>
    </source>
</reference>
<reference key="2">
    <citation type="journal article" date="2009" name="Fungal Genet. Biol.">
        <title>The 2008 update of the Aspergillus nidulans genome annotation: a community effort.</title>
        <authorList>
            <person name="Wortman J.R."/>
            <person name="Gilsenan J.M."/>
            <person name="Joardar V."/>
            <person name="Deegan J."/>
            <person name="Clutterbuck J."/>
            <person name="Andersen M.R."/>
            <person name="Archer D."/>
            <person name="Bencina M."/>
            <person name="Braus G."/>
            <person name="Coutinho P."/>
            <person name="von Dohren H."/>
            <person name="Doonan J."/>
            <person name="Driessen A.J."/>
            <person name="Durek P."/>
            <person name="Espeso E."/>
            <person name="Fekete E."/>
            <person name="Flipphi M."/>
            <person name="Estrada C.G."/>
            <person name="Geysens S."/>
            <person name="Goldman G."/>
            <person name="de Groot P.W."/>
            <person name="Hansen K."/>
            <person name="Harris S.D."/>
            <person name="Heinekamp T."/>
            <person name="Helmstaedt K."/>
            <person name="Henrissat B."/>
            <person name="Hofmann G."/>
            <person name="Homan T."/>
            <person name="Horio T."/>
            <person name="Horiuchi H."/>
            <person name="James S."/>
            <person name="Jones M."/>
            <person name="Karaffa L."/>
            <person name="Karanyi Z."/>
            <person name="Kato M."/>
            <person name="Keller N."/>
            <person name="Kelly D.E."/>
            <person name="Kiel J.A."/>
            <person name="Kim J.M."/>
            <person name="van der Klei I.J."/>
            <person name="Klis F.M."/>
            <person name="Kovalchuk A."/>
            <person name="Krasevec N."/>
            <person name="Kubicek C.P."/>
            <person name="Liu B."/>
            <person name="Maccabe A."/>
            <person name="Meyer V."/>
            <person name="Mirabito P."/>
            <person name="Miskei M."/>
            <person name="Mos M."/>
            <person name="Mullins J."/>
            <person name="Nelson D.R."/>
            <person name="Nielsen J."/>
            <person name="Oakley B.R."/>
            <person name="Osmani S.A."/>
            <person name="Pakula T."/>
            <person name="Paszewski A."/>
            <person name="Paulsen I."/>
            <person name="Pilsyk S."/>
            <person name="Pocsi I."/>
            <person name="Punt P.J."/>
            <person name="Ram A.F."/>
            <person name="Ren Q."/>
            <person name="Robellet X."/>
            <person name="Robson G."/>
            <person name="Seiboth B."/>
            <person name="van Solingen P."/>
            <person name="Specht T."/>
            <person name="Sun J."/>
            <person name="Taheri-Talesh N."/>
            <person name="Takeshita N."/>
            <person name="Ussery D."/>
            <person name="vanKuyk P.A."/>
            <person name="Visser H."/>
            <person name="van de Vondervoort P.J."/>
            <person name="de Vries R.P."/>
            <person name="Walton J."/>
            <person name="Xiang X."/>
            <person name="Xiong Y."/>
            <person name="Zeng A.P."/>
            <person name="Brandt B.W."/>
            <person name="Cornell M.J."/>
            <person name="van den Hondel C.A."/>
            <person name="Visser J."/>
            <person name="Oliver S.G."/>
            <person name="Turner G."/>
        </authorList>
    </citation>
    <scope>GENOME REANNOTATION</scope>
    <source>
        <strain>FGSC A4 / ATCC 38163 / CBS 112.46 / NRRL 194 / M139</strain>
    </source>
</reference>
<reference key="3">
    <citation type="journal article" date="2012" name="J. Am. Chem. Soc.">
        <title>Illuminating the diversity of aromatic polyketide synthases in Aspergillus nidulans.</title>
        <authorList>
            <person name="Ahuja M."/>
            <person name="Chiang Y.M."/>
            <person name="Chang S.L."/>
            <person name="Praseuth M.B."/>
            <person name="Entwistle R."/>
            <person name="Sanchez J.F."/>
            <person name="Lo H.C."/>
            <person name="Yeh H.H."/>
            <person name="Oakley B.R."/>
            <person name="Wang C.C."/>
        </authorList>
    </citation>
    <scope>FUNCTION</scope>
</reference>
<reference key="4">
    <citation type="journal article" date="2013" name="Org. Lett.">
        <title>Molecular genetic characterization of the biosynthesis cluster of a prenylated isoindolinone alkaloid aspernidine A in Aspergillus nidulans.</title>
        <authorList>
            <person name="Yaegashi J."/>
            <person name="Praseuth M.B."/>
            <person name="Tyan S.W."/>
            <person name="Sanchez J.F."/>
            <person name="Entwistle R."/>
            <person name="Chiang Y.M."/>
            <person name="Oakley B.R."/>
            <person name="Wang C.C."/>
        </authorList>
    </citation>
    <scope>IDENTIFICATION</scope>
    <scope>DISRUPTION PHENOTYPE</scope>
    <scope>FUNCTION</scope>
    <scope>CATALYTIC ACTIVITY</scope>
    <scope>PATHWAY</scope>
</reference>
<reference key="5">
    <citation type="journal article" date="2015" name="Genetics">
        <title>Beyond asexual development: modifications in the gene expression profile caused by the absence of the Aspergillus nidulans transcription factor FlbB.</title>
        <authorList>
            <person name="Oiartzabal-Arano E."/>
            <person name="Garzia A."/>
            <person name="Gorostidi A."/>
            <person name="Ugalde U."/>
            <person name="Espeso E.A."/>
            <person name="Etxebeste O."/>
        </authorList>
    </citation>
    <scope>INDUCTION</scope>
</reference>
<evidence type="ECO:0000250" key="1">
    <source>
        <dbReference type="UniProtKB" id="P04798"/>
    </source>
</evidence>
<evidence type="ECO:0000255" key="2"/>
<evidence type="ECO:0000255" key="3">
    <source>
        <dbReference type="PROSITE-ProRule" id="PRU00498"/>
    </source>
</evidence>
<evidence type="ECO:0000269" key="4">
    <source>
    </source>
</evidence>
<evidence type="ECO:0000269" key="5">
    <source>
    </source>
</evidence>
<evidence type="ECO:0000303" key="6">
    <source>
    </source>
</evidence>
<evidence type="ECO:0000305" key="7"/>
<evidence type="ECO:0000305" key="8">
    <source>
    </source>
</evidence>
<accession>C8VI81</accession>
<accession>Q5B8A5</accession>
<keyword id="KW-0325">Glycoprotein</keyword>
<keyword id="KW-0349">Heme</keyword>
<keyword id="KW-0408">Iron</keyword>
<keyword id="KW-0472">Membrane</keyword>
<keyword id="KW-0479">Metal-binding</keyword>
<keyword id="KW-0503">Monooxygenase</keyword>
<keyword id="KW-0560">Oxidoreductase</keyword>
<keyword id="KW-1185">Reference proteome</keyword>
<keyword id="KW-0812">Transmembrane</keyword>
<keyword id="KW-1133">Transmembrane helix</keyword>
<organism>
    <name type="scientific">Emericella nidulans (strain FGSC A4 / ATCC 38163 / CBS 112.46 / NRRL 194 / M139)</name>
    <name type="common">Aspergillus nidulans</name>
    <dbReference type="NCBI Taxonomy" id="227321"/>
    <lineage>
        <taxon>Eukaryota</taxon>
        <taxon>Fungi</taxon>
        <taxon>Dikarya</taxon>
        <taxon>Ascomycota</taxon>
        <taxon>Pezizomycotina</taxon>
        <taxon>Eurotiomycetes</taxon>
        <taxon>Eurotiomycetidae</taxon>
        <taxon>Eurotiales</taxon>
        <taxon>Aspergillaceae</taxon>
        <taxon>Aspergillus</taxon>
        <taxon>Aspergillus subgen. Nidulantes</taxon>
    </lineage>
</organism>
<name>PKFB_EMENI</name>
<comment type="function">
    <text evidence="4 5 8">Cytochrome P450 monooxygenase; part of the gene cluster that mediates the biosynthesis of aspernidine A, a prenylated isoindolinone (PubMed:23706169). The starting point of the biosynthesis of aspernidin A is the production of orsellinaldehyde by the non-reducing polyketide synthase pkfA (PubMed:22510154). Hydroxylation, methylation of one of the phenol groups, and prenylation, presumably catalyzed by the prenyltransferase pkfE, would be needed to yield aspernidine D (Probable). Subsequently, the cytochrome P450 monooxygenase pkfB is responsible for hydroxylation of aspernidine D to yield aspernidine E (PubMed:23706169). The dehydrogenase pkfF may be responsible for further oxidation of aspernidine E to form a dialdehyde intermediate which is further transformed in a series of steps, some of which are enzyme-mediated, to generate aspernidine A (Probable). The possibility that additional enzymes outside of the cluster are involved in aspernidine A biosynthesis cannot be excluded (Probable).</text>
</comment>
<comment type="cofactor">
    <cofactor evidence="1">
        <name>heme</name>
        <dbReference type="ChEBI" id="CHEBI:30413"/>
    </cofactor>
</comment>
<comment type="pathway">
    <text evidence="5">Secondary metabolite biosynthesis.</text>
</comment>
<comment type="subcellular location">
    <subcellularLocation>
        <location evidence="2">Membrane</location>
        <topology evidence="2">Single-pass membrane protein</topology>
    </subcellularLocation>
</comment>
<comment type="disruption phenotype">
    <text evidence="5">Abolishes the production of aspernidine A, but accumulates the intermediate aspernidine D.</text>
</comment>
<comment type="similarity">
    <text evidence="7">Belongs to the cytochrome P450 family.</text>
</comment>
<comment type="sequence caution" evidence="7">
    <conflict type="erroneous gene model prediction">
        <sequence resource="EMBL-CDS" id="EAA63126"/>
    </conflict>
</comment>
<protein>
    <recommendedName>
        <fullName evidence="6">Cytochrome P450 monooxygenase pkfB</fullName>
        <ecNumber evidence="5">1.-.-.-</ecNumber>
    </recommendedName>
    <alternativeName>
        <fullName evidence="6">Aspernidine A biosynthesis cluster protein pkfB</fullName>
    </alternativeName>
</protein>
<sequence length="508" mass="57688">MDHPHPSTFSLGLSQILVCLALLYAAIHILSVYRRLCHISGPFWARISNLPRVWWVNTSRAHEIHQQLHEKYGDVVRFGPNMVSLRNPTWIPTVYPTRMGVKKSDFYRTLAPYTPSGALPAVFSSRDEEVHRGLRGPIASLYSMSKVLPLEVFVDRTIDVLVRQLDGRFAGAGETFDLASWLQFFAFDVMGTLTFSKRYGFLEKGMDVHGMLDTIWRFLKGAAPFTQIPWVDEIWNKNVLATKLKGATGVSILGIVGKFVSQRQEESKAGKIDGTADRDMLSLFMEIQKNNQLPPWYVTAWTFSNITAGSDSAAVVMRTVFYNLLSHPSTLQKLRSELLSAGPLTQPYPSWKDVCNLPYLDACILEALRLHPPFCLPFERIVPQGGMVLGDTYFPEGTVVGMSPWVVNRHKPTFGEDSDVWNPERWMVSKELKSKREAAVLTFGAGRRVCLGRHIAILELKKIVPALVLRYDFELIDPERFTTENFWFFRQRGMDVRVKKRMQAEAGI</sequence>